<evidence type="ECO:0000255" key="1">
    <source>
        <dbReference type="HAMAP-Rule" id="MF_00251"/>
    </source>
</evidence>
<evidence type="ECO:0000305" key="2"/>
<proteinExistence type="inferred from homology"/>
<accession>A4QJN3</accession>
<dbReference type="EMBL" id="AP009367">
    <property type="protein sequence ID" value="BAF49888.1"/>
    <property type="molecule type" value="Genomic_DNA"/>
</dbReference>
<dbReference type="RefSeq" id="YP_001123064.1">
    <property type="nucleotide sequence ID" value="NC_009266.1"/>
</dbReference>
<dbReference type="SMR" id="A4QJN3"/>
<dbReference type="GeneID" id="4962263"/>
<dbReference type="GO" id="GO:0009507">
    <property type="term" value="C:chloroplast"/>
    <property type="evidence" value="ECO:0007669"/>
    <property type="project" value="UniProtKB-SubCell"/>
</dbReference>
<dbReference type="GO" id="GO:1990904">
    <property type="term" value="C:ribonucleoprotein complex"/>
    <property type="evidence" value="ECO:0007669"/>
    <property type="project" value="UniProtKB-KW"/>
</dbReference>
<dbReference type="GO" id="GO:0005840">
    <property type="term" value="C:ribosome"/>
    <property type="evidence" value="ECO:0007669"/>
    <property type="project" value="UniProtKB-KW"/>
</dbReference>
<dbReference type="GO" id="GO:0003735">
    <property type="term" value="F:structural constituent of ribosome"/>
    <property type="evidence" value="ECO:0007669"/>
    <property type="project" value="InterPro"/>
</dbReference>
<dbReference type="GO" id="GO:0006412">
    <property type="term" value="P:translation"/>
    <property type="evidence" value="ECO:0007669"/>
    <property type="project" value="UniProtKB-UniRule"/>
</dbReference>
<dbReference type="HAMAP" id="MF_00251">
    <property type="entry name" value="Ribosomal_bL36"/>
    <property type="match status" value="1"/>
</dbReference>
<dbReference type="InterPro" id="IPR000473">
    <property type="entry name" value="Ribosomal_bL36"/>
</dbReference>
<dbReference type="InterPro" id="IPR035977">
    <property type="entry name" value="Ribosomal_bL36_sp"/>
</dbReference>
<dbReference type="NCBIfam" id="TIGR01022">
    <property type="entry name" value="rpmJ_bact"/>
    <property type="match status" value="1"/>
</dbReference>
<dbReference type="PANTHER" id="PTHR42888">
    <property type="entry name" value="50S RIBOSOMAL PROTEIN L36, CHLOROPLASTIC"/>
    <property type="match status" value="1"/>
</dbReference>
<dbReference type="PANTHER" id="PTHR42888:SF1">
    <property type="entry name" value="LARGE RIBOSOMAL SUBUNIT PROTEIN BL36C"/>
    <property type="match status" value="1"/>
</dbReference>
<dbReference type="Pfam" id="PF00444">
    <property type="entry name" value="Ribosomal_L36"/>
    <property type="match status" value="1"/>
</dbReference>
<dbReference type="SUPFAM" id="SSF57840">
    <property type="entry name" value="Ribosomal protein L36"/>
    <property type="match status" value="1"/>
</dbReference>
<dbReference type="PROSITE" id="PS00828">
    <property type="entry name" value="RIBOSOMAL_L36"/>
    <property type="match status" value="1"/>
</dbReference>
<sequence length="37" mass="4460">MKIRASVRKICEKCRLIRRRGRIIVICSNPRHKQRQG</sequence>
<feature type="chain" id="PRO_0000344740" description="Large ribosomal subunit protein bL36c">
    <location>
        <begin position="1"/>
        <end position="37"/>
    </location>
</feature>
<protein>
    <recommendedName>
        <fullName evidence="1">Large ribosomal subunit protein bL36c</fullName>
    </recommendedName>
    <alternativeName>
        <fullName evidence="2">50S ribosomal protein L36, chloroplastic</fullName>
    </alternativeName>
</protein>
<keyword id="KW-0150">Chloroplast</keyword>
<keyword id="KW-0934">Plastid</keyword>
<keyword id="KW-0687">Ribonucleoprotein</keyword>
<keyword id="KW-0689">Ribosomal protein</keyword>
<organism>
    <name type="scientific">Aethionema grandiflorum</name>
    <name type="common">Persian stone-cress</name>
    <dbReference type="NCBI Taxonomy" id="72657"/>
    <lineage>
        <taxon>Eukaryota</taxon>
        <taxon>Viridiplantae</taxon>
        <taxon>Streptophyta</taxon>
        <taxon>Embryophyta</taxon>
        <taxon>Tracheophyta</taxon>
        <taxon>Spermatophyta</taxon>
        <taxon>Magnoliopsida</taxon>
        <taxon>eudicotyledons</taxon>
        <taxon>Gunneridae</taxon>
        <taxon>Pentapetalae</taxon>
        <taxon>rosids</taxon>
        <taxon>malvids</taxon>
        <taxon>Brassicales</taxon>
        <taxon>Brassicaceae</taxon>
        <taxon>Aethionemeae</taxon>
        <taxon>Aethionema</taxon>
    </lineage>
</organism>
<geneLocation type="chloroplast"/>
<name>RK36_AETGR</name>
<reference key="1">
    <citation type="submission" date="2007-03" db="EMBL/GenBank/DDBJ databases">
        <title>Sequencing analysis of Aethionema grandiflorum chloroplast DNA.</title>
        <authorList>
            <person name="Hosouchi T."/>
            <person name="Tsuruoka H."/>
            <person name="Kotani H."/>
        </authorList>
    </citation>
    <scope>NUCLEOTIDE SEQUENCE [LARGE SCALE GENOMIC DNA]</scope>
</reference>
<comment type="subcellular location">
    <subcellularLocation>
        <location>Plastid</location>
        <location>Chloroplast</location>
    </subcellularLocation>
</comment>
<comment type="similarity">
    <text evidence="1">Belongs to the bacterial ribosomal protein bL36 family.</text>
</comment>
<gene>
    <name evidence="1" type="primary">rpl36</name>
</gene>